<organism>
    <name type="scientific">Escherichia coli (strain K12)</name>
    <dbReference type="NCBI Taxonomy" id="83333"/>
    <lineage>
        <taxon>Bacteria</taxon>
        <taxon>Pseudomonadati</taxon>
        <taxon>Pseudomonadota</taxon>
        <taxon>Gammaproteobacteria</taxon>
        <taxon>Enterobacterales</taxon>
        <taxon>Enterobacteriaceae</taxon>
        <taxon>Escherichia</taxon>
    </lineage>
</organism>
<dbReference type="EC" id="2.1.1.-"/>
<dbReference type="EMBL" id="U00096">
    <property type="protein sequence ID" value="AYC08231.1"/>
    <property type="molecule type" value="Genomic_DNA"/>
</dbReference>
<dbReference type="EMBL" id="AP009048">
    <property type="protein sequence ID" value="BAE76696.1"/>
    <property type="molecule type" value="Genomic_DNA"/>
</dbReference>
<dbReference type="EMBL" id="X04387">
    <property type="status" value="NOT_ANNOTATED_CDS"/>
    <property type="molecule type" value="Genomic_DNA"/>
</dbReference>
<dbReference type="PIR" id="A65009">
    <property type="entry name" value="A65009"/>
</dbReference>
<dbReference type="BioGRID" id="4260544">
    <property type="interactions" value="113"/>
</dbReference>
<dbReference type="FunCoup" id="P76509">
    <property type="interactions" value="453"/>
</dbReference>
<dbReference type="IntAct" id="P76509">
    <property type="interactions" value="1"/>
</dbReference>
<dbReference type="REBASE" id="837526">
    <property type="entry name" value="M.EcoW3110ORF2356P"/>
</dbReference>
<dbReference type="REBASE" id="954444">
    <property type="entry name" value="M.EcoKORF2355P"/>
</dbReference>
<dbReference type="EnsemblBacteria" id="AYC08231">
    <property type="protein sequence ID" value="AYC08231"/>
    <property type="gene ID" value="b2356"/>
</dbReference>
<dbReference type="KEGG" id="ecj:JW2352"/>
<dbReference type="KEGG" id="ecoc:C3026_13105"/>
<dbReference type="PATRIC" id="fig|1411691.4.peg.4375"/>
<dbReference type="EchoBASE" id="EB2784"/>
<dbReference type="eggNOG" id="COG4725">
    <property type="taxonomic scope" value="Bacteria"/>
</dbReference>
<dbReference type="HOGENOM" id="CLU_076048_1_0_6"/>
<dbReference type="InParanoid" id="P76509"/>
<dbReference type="OrthoDB" id="6258822at2"/>
<dbReference type="BioCyc" id="EcoCyc:G7225-MONOMER"/>
<dbReference type="PRO" id="PR:P76509"/>
<dbReference type="Proteomes" id="UP000000625">
    <property type="component" value="Chromosome"/>
</dbReference>
<dbReference type="GO" id="GO:0003677">
    <property type="term" value="F:DNA binding"/>
    <property type="evidence" value="ECO:0007669"/>
    <property type="project" value="InterPro"/>
</dbReference>
<dbReference type="GO" id="GO:0009007">
    <property type="term" value="F:site-specific DNA-methyltransferase (adenine-specific) activity"/>
    <property type="evidence" value="ECO:0007669"/>
    <property type="project" value="InterPro"/>
</dbReference>
<dbReference type="GO" id="GO:0009307">
    <property type="term" value="P:DNA restriction-modification system"/>
    <property type="evidence" value="ECO:0007669"/>
    <property type="project" value="InterPro"/>
</dbReference>
<dbReference type="GO" id="GO:0032259">
    <property type="term" value="P:methylation"/>
    <property type="evidence" value="ECO:0007669"/>
    <property type="project" value="UniProtKB-KW"/>
</dbReference>
<dbReference type="GO" id="GO:0016032">
    <property type="term" value="P:viral process"/>
    <property type="evidence" value="ECO:0000315"/>
    <property type="project" value="EcoCyc"/>
</dbReference>
<dbReference type="InterPro" id="IPR008593">
    <property type="entry name" value="Dam_MeTrfase"/>
</dbReference>
<dbReference type="NCBIfam" id="TIGR01712">
    <property type="entry name" value="phage_N6A_met"/>
    <property type="match status" value="1"/>
</dbReference>
<dbReference type="Pfam" id="PF05869">
    <property type="entry name" value="Dam"/>
    <property type="match status" value="1"/>
</dbReference>
<dbReference type="PROSITE" id="PS00092">
    <property type="entry name" value="N6_MTASE"/>
    <property type="match status" value="1"/>
</dbReference>
<sequence>MSNKYCQALVELRNKPAHELKEVGDQWRTPDNIFWGINTLFGPFVLDLFTDGDNAKCAAYYTAEDNALAHDWSERLAELKGAAFGNPPYPW</sequence>
<name>YFDM_ECOLI</name>
<keyword id="KW-0489">Methyltransferase</keyword>
<keyword id="KW-1185">Reference proteome</keyword>
<keyword id="KW-0808">Transferase</keyword>
<gene>
    <name type="primary">yfdM</name>
    <name type="ordered locus">b2356</name>
    <name type="ordered locus">JW2352</name>
</gene>
<comment type="miscellaneous">
    <text evidence="1">Encoded by the CPS-53 (KpLE1) prophage.</text>
</comment>
<comment type="miscellaneous">
    <text evidence="1">May be missing up to 130 C-terminal residues compared to orthologs.</text>
</comment>
<reference key="1">
    <citation type="journal article" date="1997" name="Science">
        <title>The complete genome sequence of Escherichia coli K-12.</title>
        <authorList>
            <person name="Blattner F.R."/>
            <person name="Plunkett G. III"/>
            <person name="Bloch C.A."/>
            <person name="Perna N.T."/>
            <person name="Burland V."/>
            <person name="Riley M."/>
            <person name="Collado-Vides J."/>
            <person name="Glasner J.D."/>
            <person name="Rode C.K."/>
            <person name="Mayhew G.F."/>
            <person name="Gregor J."/>
            <person name="Davis N.W."/>
            <person name="Kirkpatrick H.A."/>
            <person name="Goeden M.A."/>
            <person name="Rose D.J."/>
            <person name="Mau B."/>
            <person name="Shao Y."/>
        </authorList>
    </citation>
    <scope>NUCLEOTIDE SEQUENCE [LARGE SCALE GENOMIC DNA]</scope>
    <source>
        <strain>K12 / MG1655 / ATCC 47076</strain>
    </source>
</reference>
<reference key="2">
    <citation type="journal article" date="2006" name="Mol. Syst. Biol.">
        <title>Highly accurate genome sequences of Escherichia coli K-12 strains MG1655 and W3110.</title>
        <authorList>
            <person name="Hayashi K."/>
            <person name="Morooka N."/>
            <person name="Yamamoto Y."/>
            <person name="Fujita K."/>
            <person name="Isono K."/>
            <person name="Choi S."/>
            <person name="Ohtsubo E."/>
            <person name="Baba T."/>
            <person name="Wanner B.L."/>
            <person name="Mori H."/>
            <person name="Horiuchi T."/>
        </authorList>
    </citation>
    <scope>NUCLEOTIDE SEQUENCE [LARGE SCALE GENOMIC DNA]</scope>
    <source>
        <strain>K12 / W3110 / ATCC 27325 / DSM 5911</strain>
    </source>
</reference>
<reference key="3">
    <citation type="journal article" date="1986" name="Nucleic Acids Res.">
        <title>Nucleotide sequence of the gene responsible for D-xylose uptake in Escherichia coli.</title>
        <authorList>
            <person name="Kurose N."/>
            <person name="Watanabe K."/>
            <person name="Kimura A."/>
        </authorList>
    </citation>
    <scope>NUCLEOTIDE SEQUENCE [GENOMIC DNA] OF 1-25</scope>
</reference>
<evidence type="ECO:0000305" key="1"/>
<proteinExistence type="predicted"/>
<accession>P76509</accession>
<accession>A0A385XMJ5</accession>
<accession>Q2MAL0</accession>
<protein>
    <recommendedName>
        <fullName>Putative methyltransferase YfdM</fullName>
        <ecNumber>2.1.1.-</ecNumber>
    </recommendedName>
</protein>
<feature type="chain" id="PRO_0000169205" description="Putative methyltransferase YfdM">
    <location>
        <begin position="1"/>
        <end position="91"/>
    </location>
</feature>